<reference key="1">
    <citation type="journal article" date="2004" name="Proc. Natl. Acad. Sci. U.S.A.">
        <title>Genome sequence of the enterobacterial phytopathogen Erwinia carotovora subsp. atroseptica and characterization of virulence factors.</title>
        <authorList>
            <person name="Bell K.S."/>
            <person name="Sebaihia M."/>
            <person name="Pritchard L."/>
            <person name="Holden M.T.G."/>
            <person name="Hyman L.J."/>
            <person name="Holeva M.C."/>
            <person name="Thomson N.R."/>
            <person name="Bentley S.D."/>
            <person name="Churcher L.J.C."/>
            <person name="Mungall K."/>
            <person name="Atkin R."/>
            <person name="Bason N."/>
            <person name="Brooks K."/>
            <person name="Chillingworth T."/>
            <person name="Clark K."/>
            <person name="Doggett J."/>
            <person name="Fraser A."/>
            <person name="Hance Z."/>
            <person name="Hauser H."/>
            <person name="Jagels K."/>
            <person name="Moule S."/>
            <person name="Norbertczak H."/>
            <person name="Ormond D."/>
            <person name="Price C."/>
            <person name="Quail M.A."/>
            <person name="Sanders M."/>
            <person name="Walker D."/>
            <person name="Whitehead S."/>
            <person name="Salmond G.P.C."/>
            <person name="Birch P.R.J."/>
            <person name="Parkhill J."/>
            <person name="Toth I.K."/>
        </authorList>
    </citation>
    <scope>NUCLEOTIDE SEQUENCE [LARGE SCALE GENOMIC DNA]</scope>
    <source>
        <strain>SCRI 1043 / ATCC BAA-672</strain>
    </source>
</reference>
<keyword id="KW-0963">Cytoplasm</keyword>
<keyword id="KW-0570">Pentose shunt</keyword>
<keyword id="KW-1185">Reference proteome</keyword>
<keyword id="KW-0704">Schiff base</keyword>
<keyword id="KW-0808">Transferase</keyword>
<comment type="function">
    <text evidence="2">Transaldolase is important for the balance of metabolites in the pentose-phosphate pathway.</text>
</comment>
<comment type="catalytic activity">
    <reaction evidence="2">
        <text>D-sedoheptulose 7-phosphate + D-glyceraldehyde 3-phosphate = D-erythrose 4-phosphate + beta-D-fructose 6-phosphate</text>
        <dbReference type="Rhea" id="RHEA:17053"/>
        <dbReference type="ChEBI" id="CHEBI:16897"/>
        <dbReference type="ChEBI" id="CHEBI:57483"/>
        <dbReference type="ChEBI" id="CHEBI:57634"/>
        <dbReference type="ChEBI" id="CHEBI:59776"/>
        <dbReference type="EC" id="2.2.1.2"/>
    </reaction>
</comment>
<comment type="pathway">
    <text evidence="2">Carbohydrate degradation; pentose phosphate pathway; D-glyceraldehyde 3-phosphate and beta-D-fructose 6-phosphate from D-ribose 5-phosphate and D-xylulose 5-phosphate (non-oxidative stage): step 2/3.</text>
</comment>
<comment type="subunit">
    <text evidence="1">Homodimer.</text>
</comment>
<comment type="subcellular location">
    <subcellularLocation>
        <location evidence="2">Cytoplasm</location>
    </subcellularLocation>
</comment>
<comment type="similarity">
    <text evidence="2">Belongs to the transaldolase family. Type 1 subfamily.</text>
</comment>
<organism>
    <name type="scientific">Pectobacterium atrosepticum (strain SCRI 1043 / ATCC BAA-672)</name>
    <name type="common">Erwinia carotovora subsp. atroseptica</name>
    <dbReference type="NCBI Taxonomy" id="218491"/>
    <lineage>
        <taxon>Bacteria</taxon>
        <taxon>Pseudomonadati</taxon>
        <taxon>Pseudomonadota</taxon>
        <taxon>Gammaproteobacteria</taxon>
        <taxon>Enterobacterales</taxon>
        <taxon>Pectobacteriaceae</taxon>
        <taxon>Pectobacterium</taxon>
    </lineage>
</organism>
<dbReference type="EC" id="2.2.1.2" evidence="2"/>
<dbReference type="EMBL" id="BX950851">
    <property type="protein sequence ID" value="CAG76785.1"/>
    <property type="molecule type" value="Genomic_DNA"/>
</dbReference>
<dbReference type="SMR" id="Q6D0B2"/>
<dbReference type="STRING" id="218491.ECA3887"/>
<dbReference type="KEGG" id="eca:ECA3887"/>
<dbReference type="PATRIC" id="fig|218491.5.peg.3944"/>
<dbReference type="eggNOG" id="COG0176">
    <property type="taxonomic scope" value="Bacteria"/>
</dbReference>
<dbReference type="HOGENOM" id="CLU_047470_0_1_6"/>
<dbReference type="OrthoDB" id="9809101at2"/>
<dbReference type="UniPathway" id="UPA00115">
    <property type="reaction ID" value="UER00414"/>
</dbReference>
<dbReference type="Proteomes" id="UP000007966">
    <property type="component" value="Chromosome"/>
</dbReference>
<dbReference type="GO" id="GO:0005829">
    <property type="term" value="C:cytosol"/>
    <property type="evidence" value="ECO:0007669"/>
    <property type="project" value="TreeGrafter"/>
</dbReference>
<dbReference type="GO" id="GO:0004801">
    <property type="term" value="F:transaldolase activity"/>
    <property type="evidence" value="ECO:0000250"/>
    <property type="project" value="UniProtKB"/>
</dbReference>
<dbReference type="GO" id="GO:0005975">
    <property type="term" value="P:carbohydrate metabolic process"/>
    <property type="evidence" value="ECO:0007669"/>
    <property type="project" value="InterPro"/>
</dbReference>
<dbReference type="GO" id="GO:0006098">
    <property type="term" value="P:pentose-phosphate shunt"/>
    <property type="evidence" value="ECO:0007669"/>
    <property type="project" value="UniProtKB-UniRule"/>
</dbReference>
<dbReference type="CDD" id="cd00957">
    <property type="entry name" value="Transaldolase_TalAB"/>
    <property type="match status" value="1"/>
</dbReference>
<dbReference type="FunFam" id="3.20.20.70:FF:000002">
    <property type="entry name" value="Transaldolase"/>
    <property type="match status" value="1"/>
</dbReference>
<dbReference type="Gene3D" id="3.20.20.70">
    <property type="entry name" value="Aldolase class I"/>
    <property type="match status" value="1"/>
</dbReference>
<dbReference type="HAMAP" id="MF_00492">
    <property type="entry name" value="Transaldolase_1"/>
    <property type="match status" value="1"/>
</dbReference>
<dbReference type="InterPro" id="IPR013785">
    <property type="entry name" value="Aldolase_TIM"/>
</dbReference>
<dbReference type="InterPro" id="IPR001585">
    <property type="entry name" value="TAL/FSA"/>
</dbReference>
<dbReference type="InterPro" id="IPR004730">
    <property type="entry name" value="Transaldolase_1"/>
</dbReference>
<dbReference type="InterPro" id="IPR018225">
    <property type="entry name" value="Transaldolase_AS"/>
</dbReference>
<dbReference type="NCBIfam" id="NF009001">
    <property type="entry name" value="PRK12346.1"/>
    <property type="match status" value="1"/>
</dbReference>
<dbReference type="NCBIfam" id="TIGR00874">
    <property type="entry name" value="talAB"/>
    <property type="match status" value="1"/>
</dbReference>
<dbReference type="PANTHER" id="PTHR10683">
    <property type="entry name" value="TRANSALDOLASE"/>
    <property type="match status" value="1"/>
</dbReference>
<dbReference type="PANTHER" id="PTHR10683:SF18">
    <property type="entry name" value="TRANSALDOLASE"/>
    <property type="match status" value="1"/>
</dbReference>
<dbReference type="Pfam" id="PF00923">
    <property type="entry name" value="TAL_FSA"/>
    <property type="match status" value="1"/>
</dbReference>
<dbReference type="SUPFAM" id="SSF51569">
    <property type="entry name" value="Aldolase"/>
    <property type="match status" value="1"/>
</dbReference>
<dbReference type="PROSITE" id="PS01054">
    <property type="entry name" value="TRANSALDOLASE_1"/>
    <property type="match status" value="1"/>
</dbReference>
<dbReference type="PROSITE" id="PS00958">
    <property type="entry name" value="TRANSALDOLASE_2"/>
    <property type="match status" value="1"/>
</dbReference>
<proteinExistence type="inferred from homology"/>
<gene>
    <name evidence="2" type="primary">tal2</name>
    <name type="ordered locus">ECA3887</name>
</gene>
<sequence>MTDKLTSLRQVTTVVADTGDIAAMKLYQPQDATTNPSLILNAAQIPEYRKLIDEAIAWAREQSSDRKQQVVDATDKLAVNIGLEILKLIPGRISTEVDARLSYDTEASVAKAKHLIKLYNDAGISNERILIKLASTWQGICAAEQLEKEGINCNLTLLFSFAQARACAEAGVFLISPFVGRILDWYKANGDKKEFAPHEDPGVVSVSEIYDYYKEHGYETVVMGASFRNVGEILELAGCDRLTIAPALLKELSESEGEVVRKLSYVGDVKVRPARMTEAEFYWQHNQDPMAIDKLADGIRKFAIDQEKLEKMIADLL</sequence>
<name>TAL2_PECAS</name>
<accession>Q6D0B2</accession>
<evidence type="ECO:0000250" key="1"/>
<evidence type="ECO:0000255" key="2">
    <source>
        <dbReference type="HAMAP-Rule" id="MF_00492"/>
    </source>
</evidence>
<protein>
    <recommendedName>
        <fullName evidence="2">Transaldolase 2</fullName>
        <ecNumber evidence="2">2.2.1.2</ecNumber>
    </recommendedName>
</protein>
<feature type="chain" id="PRO_0000230953" description="Transaldolase 2">
    <location>
        <begin position="1"/>
        <end position="317"/>
    </location>
</feature>
<feature type="active site" description="Schiff-base intermediate with substrate" evidence="2">
    <location>
        <position position="132"/>
    </location>
</feature>